<proteinExistence type="inferred from homology"/>
<name>GPH_SALCH</name>
<keyword id="KW-0119">Carbohydrate metabolism</keyword>
<keyword id="KW-0868">Chloride</keyword>
<keyword id="KW-0378">Hydrolase</keyword>
<keyword id="KW-0460">Magnesium</keyword>
<keyword id="KW-0479">Metal-binding</keyword>
<gene>
    <name type="ordered locus">SCH_3414</name>
</gene>
<comment type="function">
    <text evidence="1">Specifically catalyzes the dephosphorylation of 2-phosphoglycolate. Is involved in the dissimilation of the intracellular 2-phosphoglycolate formed during the DNA repair of 3'-phosphoglycolate ends, a major class of DNA lesions induced by oxidative stress.</text>
</comment>
<comment type="catalytic activity">
    <reaction evidence="1">
        <text>2-phosphoglycolate + H2O = glycolate + phosphate</text>
        <dbReference type="Rhea" id="RHEA:14369"/>
        <dbReference type="ChEBI" id="CHEBI:15377"/>
        <dbReference type="ChEBI" id="CHEBI:29805"/>
        <dbReference type="ChEBI" id="CHEBI:43474"/>
        <dbReference type="ChEBI" id="CHEBI:58033"/>
        <dbReference type="EC" id="3.1.3.18"/>
    </reaction>
</comment>
<comment type="cofactor">
    <cofactor evidence="1">
        <name>Mg(2+)</name>
        <dbReference type="ChEBI" id="CHEBI:18420"/>
    </cofactor>
</comment>
<comment type="cofactor">
    <cofactor evidence="1">
        <name>chloride</name>
        <dbReference type="ChEBI" id="CHEBI:17996"/>
    </cofactor>
</comment>
<comment type="pathway">
    <text evidence="1">Organic acid metabolism; glycolate biosynthesis; glycolate from 2-phosphoglycolate: step 1/1.</text>
</comment>
<comment type="subunit">
    <text evidence="1">Monomer.</text>
</comment>
<comment type="similarity">
    <text evidence="1">Belongs to the HAD-like hydrolase superfamily. CbbY/CbbZ/Gph/YieH family.</text>
</comment>
<accession>Q57IZ2</accession>
<organism>
    <name type="scientific">Salmonella choleraesuis (strain SC-B67)</name>
    <dbReference type="NCBI Taxonomy" id="321314"/>
    <lineage>
        <taxon>Bacteria</taxon>
        <taxon>Pseudomonadati</taxon>
        <taxon>Pseudomonadota</taxon>
        <taxon>Gammaproteobacteria</taxon>
        <taxon>Enterobacterales</taxon>
        <taxon>Enterobacteriaceae</taxon>
        <taxon>Salmonella</taxon>
    </lineage>
</organism>
<protein>
    <recommendedName>
        <fullName evidence="1">Phosphoglycolate phosphatase</fullName>
        <shortName evidence="1">PGP</shortName>
        <shortName evidence="1">PGPase</shortName>
        <ecNumber evidence="1">3.1.3.18</ecNumber>
    </recommendedName>
</protein>
<reference key="1">
    <citation type="journal article" date="2005" name="Nucleic Acids Res.">
        <title>The genome sequence of Salmonella enterica serovar Choleraesuis, a highly invasive and resistant zoonotic pathogen.</title>
        <authorList>
            <person name="Chiu C.-H."/>
            <person name="Tang P."/>
            <person name="Chu C."/>
            <person name="Hu S."/>
            <person name="Bao Q."/>
            <person name="Yu J."/>
            <person name="Chou Y.-Y."/>
            <person name="Wang H.-S."/>
            <person name="Lee Y.-S."/>
        </authorList>
    </citation>
    <scope>NUCLEOTIDE SEQUENCE [LARGE SCALE GENOMIC DNA]</scope>
    <source>
        <strain>SC-B67</strain>
    </source>
</reference>
<dbReference type="EC" id="3.1.3.18" evidence="1"/>
<dbReference type="EMBL" id="AE017220">
    <property type="protein sequence ID" value="AAX67320.1"/>
    <property type="molecule type" value="Genomic_DNA"/>
</dbReference>
<dbReference type="SMR" id="Q57IZ2"/>
<dbReference type="KEGG" id="sec:SCH_3414"/>
<dbReference type="HOGENOM" id="CLU_045011_19_1_6"/>
<dbReference type="UniPathway" id="UPA00865">
    <property type="reaction ID" value="UER00834"/>
</dbReference>
<dbReference type="Proteomes" id="UP000000538">
    <property type="component" value="Chromosome"/>
</dbReference>
<dbReference type="GO" id="GO:0005829">
    <property type="term" value="C:cytosol"/>
    <property type="evidence" value="ECO:0007669"/>
    <property type="project" value="TreeGrafter"/>
</dbReference>
<dbReference type="GO" id="GO:0046872">
    <property type="term" value="F:metal ion binding"/>
    <property type="evidence" value="ECO:0007669"/>
    <property type="project" value="UniProtKB-KW"/>
</dbReference>
<dbReference type="GO" id="GO:0008967">
    <property type="term" value="F:phosphoglycolate phosphatase activity"/>
    <property type="evidence" value="ECO:0007669"/>
    <property type="project" value="UniProtKB-UniRule"/>
</dbReference>
<dbReference type="GO" id="GO:0005975">
    <property type="term" value="P:carbohydrate metabolic process"/>
    <property type="evidence" value="ECO:0007669"/>
    <property type="project" value="InterPro"/>
</dbReference>
<dbReference type="GO" id="GO:0006281">
    <property type="term" value="P:DNA repair"/>
    <property type="evidence" value="ECO:0007669"/>
    <property type="project" value="TreeGrafter"/>
</dbReference>
<dbReference type="GO" id="GO:0046295">
    <property type="term" value="P:glycolate biosynthetic process"/>
    <property type="evidence" value="ECO:0007669"/>
    <property type="project" value="UniProtKB-UniRule"/>
</dbReference>
<dbReference type="CDD" id="cd16417">
    <property type="entry name" value="HAD_PGPase"/>
    <property type="match status" value="1"/>
</dbReference>
<dbReference type="FunFam" id="1.10.150.240:FF:000003">
    <property type="entry name" value="Phosphoglycolate phosphatase"/>
    <property type="match status" value="1"/>
</dbReference>
<dbReference type="FunFam" id="3.40.50.1000:FF:000022">
    <property type="entry name" value="Phosphoglycolate phosphatase"/>
    <property type="match status" value="1"/>
</dbReference>
<dbReference type="Gene3D" id="3.40.50.1000">
    <property type="entry name" value="HAD superfamily/HAD-like"/>
    <property type="match status" value="1"/>
</dbReference>
<dbReference type="Gene3D" id="1.10.150.240">
    <property type="entry name" value="Putative phosphatase, domain 2"/>
    <property type="match status" value="1"/>
</dbReference>
<dbReference type="HAMAP" id="MF_00495">
    <property type="entry name" value="GPH_hydrolase_bact"/>
    <property type="match status" value="1"/>
</dbReference>
<dbReference type="InterPro" id="IPR050155">
    <property type="entry name" value="HAD-like_hydrolase_sf"/>
</dbReference>
<dbReference type="InterPro" id="IPR036412">
    <property type="entry name" value="HAD-like_sf"/>
</dbReference>
<dbReference type="InterPro" id="IPR006439">
    <property type="entry name" value="HAD-SF_hydro_IA"/>
</dbReference>
<dbReference type="InterPro" id="IPR041492">
    <property type="entry name" value="HAD_2"/>
</dbReference>
<dbReference type="InterPro" id="IPR023214">
    <property type="entry name" value="HAD_sf"/>
</dbReference>
<dbReference type="InterPro" id="IPR023198">
    <property type="entry name" value="PGP-like_dom2"/>
</dbReference>
<dbReference type="InterPro" id="IPR037512">
    <property type="entry name" value="PGPase_prok"/>
</dbReference>
<dbReference type="NCBIfam" id="TIGR01549">
    <property type="entry name" value="HAD-SF-IA-v1"/>
    <property type="match status" value="1"/>
</dbReference>
<dbReference type="NCBIfam" id="TIGR01509">
    <property type="entry name" value="HAD-SF-IA-v3"/>
    <property type="match status" value="1"/>
</dbReference>
<dbReference type="NCBIfam" id="TIGR01449">
    <property type="entry name" value="PGP_bact"/>
    <property type="match status" value="1"/>
</dbReference>
<dbReference type="NCBIfam" id="NF009694">
    <property type="entry name" value="PRK13222.1-1"/>
    <property type="match status" value="1"/>
</dbReference>
<dbReference type="NCBIfam" id="NF009695">
    <property type="entry name" value="PRK13222.1-2"/>
    <property type="match status" value="1"/>
</dbReference>
<dbReference type="NCBIfam" id="NF009697">
    <property type="entry name" value="PRK13222.1-4"/>
    <property type="match status" value="1"/>
</dbReference>
<dbReference type="PANTHER" id="PTHR43434">
    <property type="entry name" value="PHOSPHOGLYCOLATE PHOSPHATASE"/>
    <property type="match status" value="1"/>
</dbReference>
<dbReference type="PANTHER" id="PTHR43434:SF1">
    <property type="entry name" value="PHOSPHOGLYCOLATE PHOSPHATASE"/>
    <property type="match status" value="1"/>
</dbReference>
<dbReference type="Pfam" id="PF13419">
    <property type="entry name" value="HAD_2"/>
    <property type="match status" value="1"/>
</dbReference>
<dbReference type="PRINTS" id="PR00413">
    <property type="entry name" value="HADHALOGNASE"/>
</dbReference>
<dbReference type="SFLD" id="SFLDG01135">
    <property type="entry name" value="C1.5.6:_HAD__Beta-PGM__Phospha"/>
    <property type="match status" value="1"/>
</dbReference>
<dbReference type="SFLD" id="SFLDG01129">
    <property type="entry name" value="C1.5:_HAD__Beta-PGM__Phosphata"/>
    <property type="match status" value="1"/>
</dbReference>
<dbReference type="SUPFAM" id="SSF56784">
    <property type="entry name" value="HAD-like"/>
    <property type="match status" value="1"/>
</dbReference>
<sequence length="252" mass="27328">MDKLQNIRGVAFDLDGTLVDSAPGLAAAVDMALYALELPVAGEERVITWIGNGADVLMERALTWAREERATLRKTMGKPPVDEDIPAEEQVRILRKLFDRYYGEVAEEGTFLFPHVADTLGALNASGLSLGLVTNKPTPFVAPLLESLDIAKYFSVVIGGDDVQNKKPHPEPLLLVASRLGMMPEQMLFVGDSRNDIQAAKAAGCPSVGLTYGYNYGEAIALSEPDVIYDSFNDLLPALGLPHSDNQEIKND</sequence>
<evidence type="ECO:0000255" key="1">
    <source>
        <dbReference type="HAMAP-Rule" id="MF_00495"/>
    </source>
</evidence>
<feature type="chain" id="PRO_0000238175" description="Phosphoglycolate phosphatase">
    <location>
        <begin position="1"/>
        <end position="252"/>
    </location>
</feature>
<feature type="active site" description="Nucleophile" evidence="1">
    <location>
        <position position="13"/>
    </location>
</feature>
<feature type="binding site" evidence="1">
    <location>
        <position position="13"/>
    </location>
    <ligand>
        <name>Mg(2+)</name>
        <dbReference type="ChEBI" id="CHEBI:18420"/>
    </ligand>
</feature>
<feature type="binding site" evidence="1">
    <location>
        <position position="15"/>
    </location>
    <ligand>
        <name>Mg(2+)</name>
        <dbReference type="ChEBI" id="CHEBI:18420"/>
    </ligand>
</feature>
<feature type="binding site" evidence="1">
    <location>
        <position position="192"/>
    </location>
    <ligand>
        <name>Mg(2+)</name>
        <dbReference type="ChEBI" id="CHEBI:18420"/>
    </ligand>
</feature>